<comment type="function">
    <text evidence="1">Required for coenzyme pyrroloquinoline quinone (PQQ) biosynthesis. PQQ is probably formed by cross-linking a specific glutamate to a specific tyrosine residue and excising these residues from the peptide.</text>
</comment>
<comment type="pathway">
    <text evidence="1">Cofactor biosynthesis; pyrroloquinoline quinone biosynthesis.</text>
</comment>
<comment type="similarity">
    <text evidence="1">Belongs to the PqqA family.</text>
</comment>
<organism>
    <name type="scientific">Pseudomonas putida (strain W619)</name>
    <dbReference type="NCBI Taxonomy" id="390235"/>
    <lineage>
        <taxon>Bacteria</taxon>
        <taxon>Pseudomonadati</taxon>
        <taxon>Pseudomonadota</taxon>
        <taxon>Gammaproteobacteria</taxon>
        <taxon>Pseudomonadales</taxon>
        <taxon>Pseudomonadaceae</taxon>
        <taxon>Pseudomonas</taxon>
    </lineage>
</organism>
<evidence type="ECO:0000255" key="1">
    <source>
        <dbReference type="HAMAP-Rule" id="MF_00656"/>
    </source>
</evidence>
<sequence>MWTKPAYTDLRIGFEVTMYFASR</sequence>
<name>PQQA_PSEPW</name>
<keyword id="KW-0884">PQQ biosynthesis</keyword>
<gene>
    <name evidence="1" type="primary">pqqA</name>
    <name type="ordered locus">PputW619_4823</name>
</gene>
<accession>B1JDZ6</accession>
<feature type="chain" id="PRO_1000131200" description="Coenzyme PQQ synthesis protein A">
    <location>
        <begin position="1"/>
        <end position="23"/>
    </location>
</feature>
<feature type="cross-link" description="Pyrroloquinoline quinone (Glu-Tyr)" evidence="1">
    <location>
        <begin position="15"/>
        <end position="19"/>
    </location>
</feature>
<reference key="1">
    <citation type="submission" date="2008-02" db="EMBL/GenBank/DDBJ databases">
        <title>Complete sequence of Pseudomonas putida W619.</title>
        <authorList>
            <person name="Copeland A."/>
            <person name="Lucas S."/>
            <person name="Lapidus A."/>
            <person name="Barry K."/>
            <person name="Detter J.C."/>
            <person name="Glavina del Rio T."/>
            <person name="Dalin E."/>
            <person name="Tice H."/>
            <person name="Pitluck S."/>
            <person name="Chain P."/>
            <person name="Malfatti S."/>
            <person name="Shin M."/>
            <person name="Vergez L."/>
            <person name="Schmutz J."/>
            <person name="Larimer F."/>
            <person name="Land M."/>
            <person name="Hauser L."/>
            <person name="Kyrpides N."/>
            <person name="Kim E."/>
            <person name="Taghavi S."/>
            <person name="Vangronsveld D."/>
            <person name="van der Lelie D."/>
            <person name="Richardson P."/>
        </authorList>
    </citation>
    <scope>NUCLEOTIDE SEQUENCE [LARGE SCALE GENOMIC DNA]</scope>
    <source>
        <strain>W619</strain>
    </source>
</reference>
<dbReference type="EMBL" id="CP000949">
    <property type="protein sequence ID" value="ACA75299.1"/>
    <property type="molecule type" value="Genomic_DNA"/>
</dbReference>
<dbReference type="STRING" id="390235.PputW619_4823"/>
<dbReference type="KEGG" id="ppw:PputW619_4823"/>
<dbReference type="HOGENOM" id="CLU_219131_1_0_6"/>
<dbReference type="UniPathway" id="UPA00539"/>
<dbReference type="GO" id="GO:0018189">
    <property type="term" value="P:pyrroloquinoline quinone biosynthetic process"/>
    <property type="evidence" value="ECO:0007669"/>
    <property type="project" value="UniProtKB-UniRule"/>
</dbReference>
<dbReference type="HAMAP" id="MF_00656">
    <property type="entry name" value="PQQ_syn_PqqA"/>
    <property type="match status" value="1"/>
</dbReference>
<dbReference type="InterPro" id="IPR011725">
    <property type="entry name" value="PQQ_synth_PqqA"/>
</dbReference>
<dbReference type="NCBIfam" id="TIGR02107">
    <property type="entry name" value="PQQ_syn_pqqA"/>
    <property type="match status" value="1"/>
</dbReference>
<dbReference type="Pfam" id="PF08042">
    <property type="entry name" value="PqqA"/>
    <property type="match status" value="1"/>
</dbReference>
<protein>
    <recommendedName>
        <fullName evidence="1">Coenzyme PQQ synthesis protein A</fullName>
    </recommendedName>
    <alternativeName>
        <fullName evidence="1">Pyrroloquinoline quinone biosynthesis protein A</fullName>
    </alternativeName>
</protein>
<proteinExistence type="inferred from homology"/>